<dbReference type="EC" id="4.2.1.10" evidence="1"/>
<dbReference type="EMBL" id="DS027059">
    <property type="protein sequence ID" value="EAW07688.1"/>
    <property type="molecule type" value="Genomic_DNA"/>
</dbReference>
<dbReference type="RefSeq" id="XP_001269114.1">
    <property type="nucleotide sequence ID" value="XM_001269113.1"/>
</dbReference>
<dbReference type="SMR" id="A1CPW7"/>
<dbReference type="STRING" id="344612.A1CPW7"/>
<dbReference type="EnsemblFungi" id="EAW07688">
    <property type="protein sequence ID" value="EAW07688"/>
    <property type="gene ID" value="ACLA_024030"/>
</dbReference>
<dbReference type="GeneID" id="4701115"/>
<dbReference type="KEGG" id="act:ACLA_024030"/>
<dbReference type="VEuPathDB" id="FungiDB:ACLA_024030"/>
<dbReference type="eggNOG" id="ENOG502S1A9">
    <property type="taxonomic scope" value="Eukaryota"/>
</dbReference>
<dbReference type="HOGENOM" id="CLU_090968_1_0_1"/>
<dbReference type="OMA" id="WIHEAGR"/>
<dbReference type="OrthoDB" id="8191625at2759"/>
<dbReference type="UniPathway" id="UPA00088">
    <property type="reaction ID" value="UER00178"/>
</dbReference>
<dbReference type="Proteomes" id="UP000006701">
    <property type="component" value="Unassembled WGS sequence"/>
</dbReference>
<dbReference type="GO" id="GO:0003855">
    <property type="term" value="F:3-dehydroquinate dehydratase activity"/>
    <property type="evidence" value="ECO:0007669"/>
    <property type="project" value="UniProtKB-UniRule"/>
</dbReference>
<dbReference type="GO" id="GO:0046279">
    <property type="term" value="P:3,4-dihydroxybenzoate biosynthetic process"/>
    <property type="evidence" value="ECO:0007669"/>
    <property type="project" value="UniProtKB-UniRule"/>
</dbReference>
<dbReference type="GO" id="GO:0019631">
    <property type="term" value="P:quinate catabolic process"/>
    <property type="evidence" value="ECO:0007669"/>
    <property type="project" value="TreeGrafter"/>
</dbReference>
<dbReference type="CDD" id="cd00466">
    <property type="entry name" value="DHQase_II"/>
    <property type="match status" value="1"/>
</dbReference>
<dbReference type="Gene3D" id="3.40.50.9100">
    <property type="entry name" value="Dehydroquinase, class II"/>
    <property type="match status" value="1"/>
</dbReference>
<dbReference type="HAMAP" id="MF_00169">
    <property type="entry name" value="AroQ"/>
    <property type="match status" value="1"/>
</dbReference>
<dbReference type="InterPro" id="IPR001874">
    <property type="entry name" value="DHquinase_II"/>
</dbReference>
<dbReference type="InterPro" id="IPR018509">
    <property type="entry name" value="DHquinase_II_CS"/>
</dbReference>
<dbReference type="InterPro" id="IPR036441">
    <property type="entry name" value="DHquinase_II_sf"/>
</dbReference>
<dbReference type="NCBIfam" id="TIGR01088">
    <property type="entry name" value="aroQ"/>
    <property type="match status" value="1"/>
</dbReference>
<dbReference type="NCBIfam" id="NF003804">
    <property type="entry name" value="PRK05395.1-1"/>
    <property type="match status" value="1"/>
</dbReference>
<dbReference type="NCBIfam" id="NF003805">
    <property type="entry name" value="PRK05395.1-2"/>
    <property type="match status" value="1"/>
</dbReference>
<dbReference type="NCBIfam" id="NF003806">
    <property type="entry name" value="PRK05395.1-3"/>
    <property type="match status" value="1"/>
</dbReference>
<dbReference type="NCBIfam" id="NF003807">
    <property type="entry name" value="PRK05395.1-4"/>
    <property type="match status" value="1"/>
</dbReference>
<dbReference type="PANTHER" id="PTHR21272">
    <property type="entry name" value="CATABOLIC 3-DEHYDROQUINASE"/>
    <property type="match status" value="1"/>
</dbReference>
<dbReference type="PANTHER" id="PTHR21272:SF5">
    <property type="entry name" value="CATABOLIC 3-DEHYDROQUINASE"/>
    <property type="match status" value="1"/>
</dbReference>
<dbReference type="Pfam" id="PF01220">
    <property type="entry name" value="DHquinase_II"/>
    <property type="match status" value="1"/>
</dbReference>
<dbReference type="PIRSF" id="PIRSF001399">
    <property type="entry name" value="DHquinase_II"/>
    <property type="match status" value="1"/>
</dbReference>
<dbReference type="SUPFAM" id="SSF52304">
    <property type="entry name" value="Type II 3-dehydroquinate dehydratase"/>
    <property type="match status" value="1"/>
</dbReference>
<dbReference type="PROSITE" id="PS01029">
    <property type="entry name" value="DEHYDROQUINASE_II"/>
    <property type="match status" value="1"/>
</dbReference>
<organism>
    <name type="scientific">Aspergillus clavatus (strain ATCC 1007 / CBS 513.65 / DSM 816 / NCTC 3887 / NRRL 1 / QM 1276 / 107)</name>
    <dbReference type="NCBI Taxonomy" id="344612"/>
    <lineage>
        <taxon>Eukaryota</taxon>
        <taxon>Fungi</taxon>
        <taxon>Dikarya</taxon>
        <taxon>Ascomycota</taxon>
        <taxon>Pezizomycotina</taxon>
        <taxon>Eurotiomycetes</taxon>
        <taxon>Eurotiomycetidae</taxon>
        <taxon>Eurotiales</taxon>
        <taxon>Aspergillaceae</taxon>
        <taxon>Aspergillus</taxon>
        <taxon>Aspergillus subgen. Fumigati</taxon>
    </lineage>
</organism>
<comment type="function">
    <text evidence="1">Is involved in the catabolism of quinate. Allows the utilization of quinate as carbon source via the beta-ketoadipate pathway.</text>
</comment>
<comment type="catalytic activity">
    <reaction evidence="1">
        <text>3-dehydroquinate = 3-dehydroshikimate + H2O</text>
        <dbReference type="Rhea" id="RHEA:21096"/>
        <dbReference type="ChEBI" id="CHEBI:15377"/>
        <dbReference type="ChEBI" id="CHEBI:16630"/>
        <dbReference type="ChEBI" id="CHEBI:32364"/>
        <dbReference type="EC" id="4.2.1.10"/>
    </reaction>
</comment>
<comment type="pathway">
    <text evidence="1">Aromatic compound metabolism; 3,4-dihydroxybenzoate biosynthesis; 3,4-dihydroxybenzoate from 3-dehydroquinate: step 1/2.</text>
</comment>
<comment type="subunit">
    <text evidence="1">Homododecamer. Adopts a ring-like structure, composed of an arrangement of two hexameric rings stacked on top of one another.</text>
</comment>
<comment type="similarity">
    <text evidence="1">Belongs to the type-II 3-dehydroquinase family.</text>
</comment>
<protein>
    <recommendedName>
        <fullName evidence="1">Catabolic 3-dehydroquinase</fullName>
        <shortName evidence="1">cDHQase</shortName>
        <ecNumber evidence="1">4.2.1.10</ecNumber>
    </recommendedName>
    <alternativeName>
        <fullName evidence="1">3-dehydroquinate dehydratase</fullName>
    </alternativeName>
</protein>
<accession>A1CPW7</accession>
<sequence length="150" mass="16126">MGKSILLINGPNLNLLGTREPHIYGSTTLPDIVASSKAHAESLGATLEAFQSNHEGAIVDRIQEARGNVDGIVINPGAFTHTSVAIRDALLAVNIPFIELHVSNVHAREPWRHHSYFSDKAAGIIVGLGAYGYKVAVEHVALNFKERASL</sequence>
<reference key="1">
    <citation type="journal article" date="2008" name="PLoS Genet.">
        <title>Genomic islands in the pathogenic filamentous fungus Aspergillus fumigatus.</title>
        <authorList>
            <person name="Fedorova N.D."/>
            <person name="Khaldi N."/>
            <person name="Joardar V.S."/>
            <person name="Maiti R."/>
            <person name="Amedeo P."/>
            <person name="Anderson M.J."/>
            <person name="Crabtree J."/>
            <person name="Silva J.C."/>
            <person name="Badger J.H."/>
            <person name="Albarraq A."/>
            <person name="Angiuoli S."/>
            <person name="Bussey H."/>
            <person name="Bowyer P."/>
            <person name="Cotty P.J."/>
            <person name="Dyer P.S."/>
            <person name="Egan A."/>
            <person name="Galens K."/>
            <person name="Fraser-Liggett C.M."/>
            <person name="Haas B.J."/>
            <person name="Inman J.M."/>
            <person name="Kent R."/>
            <person name="Lemieux S."/>
            <person name="Malavazi I."/>
            <person name="Orvis J."/>
            <person name="Roemer T."/>
            <person name="Ronning C.M."/>
            <person name="Sundaram J.P."/>
            <person name="Sutton G."/>
            <person name="Turner G."/>
            <person name="Venter J.C."/>
            <person name="White O.R."/>
            <person name="Whitty B.R."/>
            <person name="Youngman P."/>
            <person name="Wolfe K.H."/>
            <person name="Goldman G.H."/>
            <person name="Wortman J.R."/>
            <person name="Jiang B."/>
            <person name="Denning D.W."/>
            <person name="Nierman W.C."/>
        </authorList>
    </citation>
    <scope>NUCLEOTIDE SEQUENCE [LARGE SCALE GENOMIC DNA]</scope>
    <source>
        <strain>ATCC 1007 / CBS 513.65 / DSM 816 / NCTC 3887 / NRRL 1 / QM 1276 / 107</strain>
    </source>
</reference>
<evidence type="ECO:0000255" key="1">
    <source>
        <dbReference type="HAMAP-Rule" id="MF_03136"/>
    </source>
</evidence>
<name>3DHQ_ASPCL</name>
<feature type="chain" id="PRO_0000402351" description="Catabolic 3-dehydroquinase">
    <location>
        <begin position="1"/>
        <end position="150"/>
    </location>
</feature>
<feature type="active site" description="Proton acceptor" evidence="1">
    <location>
        <position position="24"/>
    </location>
</feature>
<feature type="active site" description="Proton donor" evidence="1">
    <location>
        <position position="101"/>
    </location>
</feature>
<feature type="binding site" evidence="1">
    <location>
        <position position="75"/>
    </location>
    <ligand>
        <name>substrate</name>
    </ligand>
</feature>
<feature type="binding site" evidence="1">
    <location>
        <position position="81"/>
    </location>
    <ligand>
        <name>substrate</name>
    </ligand>
</feature>
<feature type="binding site" evidence="1">
    <location>
        <position position="88"/>
    </location>
    <ligand>
        <name>substrate</name>
    </ligand>
</feature>
<feature type="binding site" evidence="1">
    <location>
        <begin position="102"/>
        <end position="103"/>
    </location>
    <ligand>
        <name>substrate</name>
    </ligand>
</feature>
<feature type="binding site" evidence="1">
    <location>
        <position position="112"/>
    </location>
    <ligand>
        <name>substrate</name>
    </ligand>
</feature>
<feature type="site" description="Transition state stabilizer" evidence="1">
    <location>
        <position position="19"/>
    </location>
</feature>
<proteinExistence type="inferred from homology"/>
<gene>
    <name evidence="1" type="primary">qutE</name>
    <name type="ORF">ACLA_024030</name>
</gene>
<keyword id="KW-0456">Lyase</keyword>
<keyword id="KW-0672">Quinate metabolism</keyword>
<keyword id="KW-1185">Reference proteome</keyword>